<comment type="function">
    <text evidence="2 7">Cell-surface glycoprotein having a role in immunoadhesion (PubMed:7526854). Mediates in the adhesion of blood neutrophils in cytokine-activated endothelium through interaction with SELPLG/PSGL1. May have a role in capillary morphogenesis (By similarity).</text>
</comment>
<comment type="subunit">
    <text evidence="2">Interacts with SELPLG/PSGL1 and PODXL2 through the sialyl Lewis X epitope. SELPLG sulfation appears not to be required for this interaction.</text>
</comment>
<comment type="subcellular location">
    <subcellularLocation>
        <location evidence="7">Cell membrane</location>
        <topology evidence="8">Single-pass type I membrane protein</topology>
    </subcellularLocation>
</comment>
<comment type="miscellaneous">
    <text evidence="7">Important in acute cellular allograft rejection and probably also in xenograft rejection.</text>
</comment>
<comment type="similarity">
    <text evidence="8">Belongs to the selectin/LECAM family.</text>
</comment>
<gene>
    <name type="primary">SELE</name>
</gene>
<protein>
    <recommendedName>
        <fullName>E-selectin</fullName>
    </recommendedName>
    <alternativeName>
        <fullName>CD62 antigen-like family member E</fullName>
    </alternativeName>
    <alternativeName>
        <fullName>Endothelial leukocyte adhesion molecule 1</fullName>
        <shortName>ELAM-1</shortName>
    </alternativeName>
    <alternativeName>
        <fullName>Leukocyte-endothelial cell adhesion molecule 2</fullName>
        <shortName>LECAM2</shortName>
    </alternativeName>
    <cdAntigenName>CD62E</cdAntigenName>
</protein>
<reference key="1">
    <citation type="journal article" date="1994" name="Biochem. Biophys. Res. Commun.">
        <title>Molecular and functional analysis of porcine E-selectin reveals a potential role in xenograft rejection.</title>
        <authorList>
            <person name="Rollins S.A."/>
            <person name="Evans M.J."/>
            <person name="Johnson K.K."/>
            <person name="Elliot E.A."/>
            <person name="Squinto S.P."/>
            <person name="Matis L.A."/>
            <person name="Rother R.P."/>
        </authorList>
    </citation>
    <scope>NUCLEOTIDE SEQUENCE [MRNA]</scope>
    <scope>FUNCTION</scope>
    <scope>SUBCELLULAR LOCATION</scope>
    <source>
        <tissue>Aortic endothelium</tissue>
    </source>
</reference>
<reference key="2">
    <citation type="journal article" date="1994" name="Biochem. Biophys. Res. Commun.">
        <title>Cloning and expression kinetics of porcine vascular cell adhesion molecule.</title>
        <authorList>
            <person name="Tsang Y.T.M."/>
            <person name="Haskard D.O."/>
            <person name="Robinson M.K."/>
        </authorList>
    </citation>
    <scope>NUCLEOTIDE SEQUENCE [MRNA]</scope>
    <source>
        <tissue>Aortic endothelium</tissue>
    </source>
</reference>
<proteinExistence type="evidence at transcript level"/>
<dbReference type="EMBL" id="L39076">
    <property type="protein sequence ID" value="AAA61545.1"/>
    <property type="molecule type" value="mRNA"/>
</dbReference>
<dbReference type="EMBL" id="U08350">
    <property type="protein sequence ID" value="AAA21541.1"/>
    <property type="molecule type" value="mRNA"/>
</dbReference>
<dbReference type="RefSeq" id="NP_999433.1">
    <property type="nucleotide sequence ID" value="NM_214268.1"/>
</dbReference>
<dbReference type="SMR" id="P98110"/>
<dbReference type="FunCoup" id="P98110">
    <property type="interactions" value="70"/>
</dbReference>
<dbReference type="STRING" id="9823.ENSSSCP00000006699"/>
<dbReference type="GlyCosmos" id="P98110">
    <property type="glycosylation" value="8 sites, No reported glycans"/>
</dbReference>
<dbReference type="GlyGen" id="P98110">
    <property type="glycosylation" value="8 sites"/>
</dbReference>
<dbReference type="PaxDb" id="9823-ENSSSCP00000006699"/>
<dbReference type="Ensembl" id="ENSSSCT00015018437.1">
    <property type="protein sequence ID" value="ENSSSCP00015007307.1"/>
    <property type="gene ID" value="ENSSSCG00015013883.1"/>
</dbReference>
<dbReference type="Ensembl" id="ENSSSCT00030070356.1">
    <property type="protein sequence ID" value="ENSSSCP00030032085.1"/>
    <property type="gene ID" value="ENSSSCG00030050466.1"/>
</dbReference>
<dbReference type="Ensembl" id="ENSSSCT00050093099.1">
    <property type="protein sequence ID" value="ENSSSCP00050040160.1"/>
    <property type="gene ID" value="ENSSSCG00050068229.1"/>
</dbReference>
<dbReference type="Ensembl" id="ENSSSCT00060093921.1">
    <property type="protein sequence ID" value="ENSSSCP00060040635.1"/>
    <property type="gene ID" value="ENSSSCG00060068755.1"/>
</dbReference>
<dbReference type="Ensembl" id="ENSSSCT00065004958.1">
    <property type="protein sequence ID" value="ENSSSCP00065002143.1"/>
    <property type="gene ID" value="ENSSSCG00065003630.1"/>
</dbReference>
<dbReference type="Ensembl" id="ENSSSCT00110024211">
    <property type="protein sequence ID" value="ENSSSCP00110016409"/>
    <property type="gene ID" value="ENSSSCG00110012609"/>
</dbReference>
<dbReference type="GeneID" id="397508"/>
<dbReference type="KEGG" id="ssc:397508"/>
<dbReference type="CTD" id="6401"/>
<dbReference type="eggNOG" id="KOG4297">
    <property type="taxonomic scope" value="Eukaryota"/>
</dbReference>
<dbReference type="InParanoid" id="P98110"/>
<dbReference type="OrthoDB" id="406096at2759"/>
<dbReference type="Reactome" id="R-SSC-202733">
    <property type="pathway name" value="Cell surface interactions at the vascular wall"/>
</dbReference>
<dbReference type="Proteomes" id="UP000008227">
    <property type="component" value="Unplaced"/>
</dbReference>
<dbReference type="Proteomes" id="UP000314985">
    <property type="component" value="Unplaced"/>
</dbReference>
<dbReference type="Proteomes" id="UP000694570">
    <property type="component" value="Unplaced"/>
</dbReference>
<dbReference type="Proteomes" id="UP000694571">
    <property type="component" value="Unplaced"/>
</dbReference>
<dbReference type="Proteomes" id="UP000694720">
    <property type="component" value="Unplaced"/>
</dbReference>
<dbReference type="Proteomes" id="UP000694722">
    <property type="component" value="Unplaced"/>
</dbReference>
<dbReference type="Proteomes" id="UP000694723">
    <property type="component" value="Unplaced"/>
</dbReference>
<dbReference type="Proteomes" id="UP000694724">
    <property type="component" value="Unplaced"/>
</dbReference>
<dbReference type="Proteomes" id="UP000694725">
    <property type="component" value="Unplaced"/>
</dbReference>
<dbReference type="Proteomes" id="UP000694726">
    <property type="component" value="Unplaced"/>
</dbReference>
<dbReference type="Proteomes" id="UP000694727">
    <property type="component" value="Unplaced"/>
</dbReference>
<dbReference type="Proteomes" id="UP000694728">
    <property type="component" value="Unplaced"/>
</dbReference>
<dbReference type="GO" id="GO:0009897">
    <property type="term" value="C:external side of plasma membrane"/>
    <property type="evidence" value="ECO:0000318"/>
    <property type="project" value="GO_Central"/>
</dbReference>
<dbReference type="GO" id="GO:0005615">
    <property type="term" value="C:extracellular space"/>
    <property type="evidence" value="ECO:0000318"/>
    <property type="project" value="GO_Central"/>
</dbReference>
<dbReference type="GO" id="GO:0046872">
    <property type="term" value="F:metal ion binding"/>
    <property type="evidence" value="ECO:0007669"/>
    <property type="project" value="UniProtKB-KW"/>
</dbReference>
<dbReference type="GO" id="GO:0070492">
    <property type="term" value="F:oligosaccharide binding"/>
    <property type="evidence" value="ECO:0000318"/>
    <property type="project" value="GO_Central"/>
</dbReference>
<dbReference type="GO" id="GO:0033691">
    <property type="term" value="F:sialic acid binding"/>
    <property type="evidence" value="ECO:0000318"/>
    <property type="project" value="GO_Central"/>
</dbReference>
<dbReference type="GO" id="GO:0007157">
    <property type="term" value="P:heterophilic cell-cell adhesion via plasma membrane cell adhesion molecules"/>
    <property type="evidence" value="ECO:0000318"/>
    <property type="project" value="GO_Central"/>
</dbReference>
<dbReference type="GO" id="GO:0050901">
    <property type="term" value="P:leukocyte tethering or rolling"/>
    <property type="evidence" value="ECO:0000318"/>
    <property type="project" value="GO_Central"/>
</dbReference>
<dbReference type="GO" id="GO:1903238">
    <property type="term" value="P:positive regulation of leukocyte tethering or rolling"/>
    <property type="evidence" value="ECO:0000250"/>
    <property type="project" value="UniProtKB"/>
</dbReference>
<dbReference type="GO" id="GO:0034097">
    <property type="term" value="P:response to cytokine"/>
    <property type="evidence" value="ECO:0000318"/>
    <property type="project" value="GO_Central"/>
</dbReference>
<dbReference type="CDD" id="cd00033">
    <property type="entry name" value="CCP"/>
    <property type="match status" value="4"/>
</dbReference>
<dbReference type="CDD" id="cd03592">
    <property type="entry name" value="CLECT_selectins_like"/>
    <property type="match status" value="1"/>
</dbReference>
<dbReference type="CDD" id="cd00054">
    <property type="entry name" value="EGF_CA"/>
    <property type="match status" value="1"/>
</dbReference>
<dbReference type="FunFam" id="3.10.100.10:FF:000007">
    <property type="entry name" value="L-selectin"/>
    <property type="match status" value="1"/>
</dbReference>
<dbReference type="FunFam" id="2.10.25.10:FF:000176">
    <property type="entry name" value="Selectin P"/>
    <property type="match status" value="1"/>
</dbReference>
<dbReference type="FunFam" id="2.10.70.10:FF:000001">
    <property type="entry name" value="Selectin P"/>
    <property type="match status" value="3"/>
</dbReference>
<dbReference type="Gene3D" id="2.10.70.10">
    <property type="entry name" value="Complement Module, domain 1"/>
    <property type="match status" value="4"/>
</dbReference>
<dbReference type="Gene3D" id="3.10.100.10">
    <property type="entry name" value="Mannose-Binding Protein A, subunit A"/>
    <property type="match status" value="1"/>
</dbReference>
<dbReference type="InterPro" id="IPR001304">
    <property type="entry name" value="C-type_lectin-like"/>
</dbReference>
<dbReference type="InterPro" id="IPR016186">
    <property type="entry name" value="C-type_lectin-like/link_sf"/>
</dbReference>
<dbReference type="InterPro" id="IPR018378">
    <property type="entry name" value="C-type_lectin_CS"/>
</dbReference>
<dbReference type="InterPro" id="IPR050350">
    <property type="entry name" value="Compl-Cell_Adhes-Reg"/>
</dbReference>
<dbReference type="InterPro" id="IPR016187">
    <property type="entry name" value="CTDL_fold"/>
</dbReference>
<dbReference type="InterPro" id="IPR000742">
    <property type="entry name" value="EGF-like_dom"/>
</dbReference>
<dbReference type="InterPro" id="IPR033991">
    <property type="entry name" value="Selectin_CTLD"/>
</dbReference>
<dbReference type="InterPro" id="IPR002396">
    <property type="entry name" value="Selectin_superfamily"/>
</dbReference>
<dbReference type="InterPro" id="IPR035976">
    <property type="entry name" value="Sushi/SCR/CCP_sf"/>
</dbReference>
<dbReference type="InterPro" id="IPR000436">
    <property type="entry name" value="Sushi_SCR_CCP_dom"/>
</dbReference>
<dbReference type="PANTHER" id="PTHR19325">
    <property type="entry name" value="COMPLEMENT COMPONENT-RELATED SUSHI DOMAIN-CONTAINING"/>
    <property type="match status" value="1"/>
</dbReference>
<dbReference type="PANTHER" id="PTHR19325:SF493">
    <property type="entry name" value="E-SELECTIN"/>
    <property type="match status" value="1"/>
</dbReference>
<dbReference type="Pfam" id="PF00059">
    <property type="entry name" value="Lectin_C"/>
    <property type="match status" value="1"/>
</dbReference>
<dbReference type="Pfam" id="PF00084">
    <property type="entry name" value="Sushi"/>
    <property type="match status" value="4"/>
</dbReference>
<dbReference type="PRINTS" id="PR00343">
    <property type="entry name" value="SELECTIN"/>
</dbReference>
<dbReference type="SMART" id="SM00032">
    <property type="entry name" value="CCP"/>
    <property type="match status" value="4"/>
</dbReference>
<dbReference type="SMART" id="SM00034">
    <property type="entry name" value="CLECT"/>
    <property type="match status" value="1"/>
</dbReference>
<dbReference type="SUPFAM" id="SSF56436">
    <property type="entry name" value="C-type lectin-like"/>
    <property type="match status" value="1"/>
</dbReference>
<dbReference type="SUPFAM" id="SSF57535">
    <property type="entry name" value="Complement control module/SCR domain"/>
    <property type="match status" value="4"/>
</dbReference>
<dbReference type="PROSITE" id="PS00615">
    <property type="entry name" value="C_TYPE_LECTIN_1"/>
    <property type="match status" value="1"/>
</dbReference>
<dbReference type="PROSITE" id="PS50041">
    <property type="entry name" value="C_TYPE_LECTIN_2"/>
    <property type="match status" value="1"/>
</dbReference>
<dbReference type="PROSITE" id="PS00022">
    <property type="entry name" value="EGF_1"/>
    <property type="match status" value="1"/>
</dbReference>
<dbReference type="PROSITE" id="PS01186">
    <property type="entry name" value="EGF_2"/>
    <property type="match status" value="1"/>
</dbReference>
<dbReference type="PROSITE" id="PS50026">
    <property type="entry name" value="EGF_3"/>
    <property type="match status" value="1"/>
</dbReference>
<dbReference type="PROSITE" id="PS50923">
    <property type="entry name" value="SUSHI"/>
    <property type="match status" value="4"/>
</dbReference>
<evidence type="ECO:0000250" key="1"/>
<evidence type="ECO:0000250" key="2">
    <source>
        <dbReference type="UniProtKB" id="P16581"/>
    </source>
</evidence>
<evidence type="ECO:0000255" key="3"/>
<evidence type="ECO:0000255" key="4">
    <source>
        <dbReference type="PROSITE-ProRule" id="PRU00040"/>
    </source>
</evidence>
<evidence type="ECO:0000255" key="5">
    <source>
        <dbReference type="PROSITE-ProRule" id="PRU00076"/>
    </source>
</evidence>
<evidence type="ECO:0000255" key="6">
    <source>
        <dbReference type="PROSITE-ProRule" id="PRU00302"/>
    </source>
</evidence>
<evidence type="ECO:0000269" key="7">
    <source>
    </source>
</evidence>
<evidence type="ECO:0000305" key="8"/>
<feature type="signal peptide" evidence="3">
    <location>
        <begin position="1"/>
        <end position="22"/>
    </location>
</feature>
<feature type="chain" id="PRO_0000017494" description="E-selectin">
    <location>
        <begin position="23"/>
        <end position="484"/>
    </location>
</feature>
<feature type="topological domain" description="Extracellular" evidence="3">
    <location>
        <begin position="23"/>
        <end position="429"/>
    </location>
</feature>
<feature type="transmembrane region" description="Helical" evidence="3">
    <location>
        <begin position="430"/>
        <end position="451"/>
    </location>
</feature>
<feature type="topological domain" description="Cytoplasmic" evidence="3">
    <location>
        <begin position="452"/>
        <end position="484"/>
    </location>
</feature>
<feature type="domain" description="C-type lectin" evidence="4">
    <location>
        <begin position="23"/>
        <end position="140"/>
    </location>
</feature>
<feature type="domain" description="EGF-like" evidence="5">
    <location>
        <begin position="141"/>
        <end position="176"/>
    </location>
</feature>
<feature type="domain" description="Sushi 1" evidence="6">
    <location>
        <begin position="179"/>
        <end position="237"/>
    </location>
</feature>
<feature type="domain" description="Sushi 2" evidence="6">
    <location>
        <begin position="251"/>
        <end position="300"/>
    </location>
</feature>
<feature type="domain" description="Sushi 3" evidence="6">
    <location>
        <begin position="301"/>
        <end position="363"/>
    </location>
</feature>
<feature type="domain" description="Sushi 4" evidence="6">
    <location>
        <begin position="364"/>
        <end position="422"/>
    </location>
</feature>
<feature type="binding site" evidence="2">
    <location>
        <begin position="102"/>
        <end position="110"/>
    </location>
    <ligand>
        <name>a carbohydrate</name>
        <dbReference type="ChEBI" id="CHEBI:16646"/>
    </ligand>
</feature>
<feature type="binding site" evidence="2">
    <location>
        <position position="102"/>
    </location>
    <ligand>
        <name>Ca(2+)</name>
        <dbReference type="ChEBI" id="CHEBI:29108"/>
    </ligand>
</feature>
<feature type="binding site" evidence="2">
    <location>
        <position position="104"/>
    </location>
    <ligand>
        <name>Ca(2+)</name>
        <dbReference type="ChEBI" id="CHEBI:29108"/>
    </ligand>
</feature>
<feature type="binding site" evidence="2">
    <location>
        <position position="110"/>
    </location>
    <ligand>
        <name>Ca(2+)</name>
        <dbReference type="ChEBI" id="CHEBI:29108"/>
    </ligand>
</feature>
<feature type="binding site" evidence="2">
    <location>
        <begin position="114"/>
        <end position="119"/>
    </location>
    <ligand>
        <name>a carbohydrate</name>
        <dbReference type="ChEBI" id="CHEBI:16646"/>
    </ligand>
</feature>
<feature type="binding site" evidence="2">
    <location>
        <begin position="127"/>
        <end position="129"/>
    </location>
    <ligand>
        <name>a carbohydrate</name>
        <dbReference type="ChEBI" id="CHEBI:16646"/>
    </ligand>
</feature>
<feature type="binding site" evidence="2">
    <location>
        <position position="127"/>
    </location>
    <ligand>
        <name>Ca(2+)</name>
        <dbReference type="ChEBI" id="CHEBI:29108"/>
    </ligand>
</feature>
<feature type="binding site" evidence="2">
    <location>
        <position position="128"/>
    </location>
    <ligand>
        <name>Ca(2+)</name>
        <dbReference type="ChEBI" id="CHEBI:29108"/>
    </ligand>
</feature>
<feature type="glycosylation site" description="N-linked (GlcNAc...) asparagine" evidence="3">
    <location>
        <position position="61"/>
    </location>
</feature>
<feature type="glycosylation site" description="N-linked (GlcNAc...) asparagine" evidence="3">
    <location>
        <position position="65"/>
    </location>
</feature>
<feature type="glycosylation site" description="N-linked (GlcNAc...) asparagine" evidence="3">
    <location>
        <position position="79"/>
    </location>
</feature>
<feature type="glycosylation site" description="N-linked (GlcNAc...) asparagine" evidence="3">
    <location>
        <position position="160"/>
    </location>
</feature>
<feature type="glycosylation site" description="N-linked (GlcNAc...) asparagine" evidence="3">
    <location>
        <position position="201"/>
    </location>
</feature>
<feature type="glycosylation site" description="N-linked (GlcNAc...) asparagine" evidence="3">
    <location>
        <position position="254"/>
    </location>
</feature>
<feature type="glycosylation site" description="N-linked (GlcNAc...) asparagine" evidence="3">
    <location>
        <position position="376"/>
    </location>
</feature>
<feature type="glycosylation site" description="N-linked (GlcNAc...) asparagine" evidence="3">
    <location>
        <position position="400"/>
    </location>
</feature>
<feature type="disulfide bond" evidence="2">
    <location>
        <begin position="41"/>
        <end position="139"/>
    </location>
</feature>
<feature type="disulfide bond" evidence="2">
    <location>
        <begin position="112"/>
        <end position="131"/>
    </location>
</feature>
<feature type="disulfide bond" evidence="2">
    <location>
        <begin position="144"/>
        <end position="155"/>
    </location>
</feature>
<feature type="disulfide bond" evidence="2">
    <location>
        <begin position="149"/>
        <end position="164"/>
    </location>
</feature>
<feature type="disulfide bond" evidence="2">
    <location>
        <begin position="166"/>
        <end position="175"/>
    </location>
</feature>
<feature type="disulfide bond" evidence="2">
    <location>
        <begin position="181"/>
        <end position="222"/>
    </location>
</feature>
<feature type="disulfide bond" evidence="2">
    <location>
        <begin position="194"/>
        <end position="204"/>
    </location>
</feature>
<feature type="disulfide bond" evidence="2">
    <location>
        <begin position="208"/>
        <end position="235"/>
    </location>
</feature>
<feature type="disulfide bond" evidence="1">
    <location>
        <begin position="240"/>
        <end position="285"/>
    </location>
</feature>
<feature type="disulfide bond" evidence="1">
    <location>
        <begin position="271"/>
        <end position="298"/>
    </location>
</feature>
<feature type="disulfide bond" evidence="1">
    <location>
        <begin position="303"/>
        <end position="348"/>
    </location>
</feature>
<feature type="disulfide bond" evidence="1">
    <location>
        <begin position="334"/>
        <end position="361"/>
    </location>
</feature>
<feature type="disulfide bond" evidence="1">
    <location>
        <begin position="366"/>
        <end position="407"/>
    </location>
</feature>
<feature type="disulfide bond" evidence="1">
    <location>
        <begin position="393"/>
        <end position="420"/>
    </location>
</feature>
<feature type="sequence conflict" description="In Ref. 2; AAA21541." evidence="8" ref="2">
    <original>C</original>
    <variation>Y</variation>
    <location>
        <position position="253"/>
    </location>
</feature>
<feature type="sequence conflict" description="In Ref. 2; AAA21541." evidence="8" ref="2">
    <original>L</original>
    <variation>F</variation>
    <location>
        <position position="313"/>
    </location>
</feature>
<feature type="sequence conflict" description="In Ref. 2; AAA21541." evidence="8" ref="2">
    <original>T</original>
    <variation>N</variation>
    <location>
        <position position="321"/>
    </location>
</feature>
<feature type="sequence conflict" description="In Ref. 2; AAA21541." evidence="8" ref="2">
    <original>K</original>
    <variation>N</variation>
    <location>
        <position position="327"/>
    </location>
</feature>
<feature type="sequence conflict" description="In Ref. 2; AAA21541." evidence="8" ref="2">
    <original>V</original>
    <variation>A</variation>
    <location>
        <position position="363"/>
    </location>
</feature>
<feature type="sequence conflict" description="In Ref. 2; AAA21541." evidence="8" ref="2">
    <original>V</original>
    <variation>M</variation>
    <location>
        <position position="384"/>
    </location>
</feature>
<feature type="sequence conflict" description="In Ref. 2; AAA21541." evidence="8" ref="2">
    <original>KFVPSSSSECLQPNGSYQMPSDLI</original>
    <variation>NLFLPAAPNAFNPMDPTKCLLT</variation>
    <location>
        <begin position="461"/>
        <end position="484"/>
    </location>
</feature>
<organism>
    <name type="scientific">Sus scrofa</name>
    <name type="common">Pig</name>
    <dbReference type="NCBI Taxonomy" id="9823"/>
    <lineage>
        <taxon>Eukaryota</taxon>
        <taxon>Metazoa</taxon>
        <taxon>Chordata</taxon>
        <taxon>Craniata</taxon>
        <taxon>Vertebrata</taxon>
        <taxon>Euteleostomi</taxon>
        <taxon>Mammalia</taxon>
        <taxon>Eutheria</taxon>
        <taxon>Laurasiatheria</taxon>
        <taxon>Artiodactyla</taxon>
        <taxon>Suina</taxon>
        <taxon>Suidae</taxon>
        <taxon>Sus</taxon>
    </lineage>
</organism>
<name>LYAM2_PIG</name>
<keyword id="KW-0106">Calcium</keyword>
<keyword id="KW-0130">Cell adhesion</keyword>
<keyword id="KW-1003">Cell membrane</keyword>
<keyword id="KW-1015">Disulfide bond</keyword>
<keyword id="KW-0245">EGF-like domain</keyword>
<keyword id="KW-0325">Glycoprotein</keyword>
<keyword id="KW-0430">Lectin</keyword>
<keyword id="KW-0472">Membrane</keyword>
<keyword id="KW-0479">Metal-binding</keyword>
<keyword id="KW-1185">Reference proteome</keyword>
<keyword id="KW-0677">Repeat</keyword>
<keyword id="KW-0732">Signal</keyword>
<keyword id="KW-0768">Sushi</keyword>
<keyword id="KW-0812">Transmembrane</keyword>
<keyword id="KW-1133">Transmembrane helix</keyword>
<sequence>MIASQFLSALPLVLLLLRESGAWSYSASTETMTFDDASAYCQQRYTHLVAIQNHAEIEYLNSTFNYSASYYWIGIRKINGTWTWIGTKKALTPEATNWAPGEPNNKQSNEDCVEIYIKRDKDSGKWNDERCSKKKLALCYTAACTPTSCSGHGECIETINSSTCQCYPGFRGLQCEQVVECDALENPVNGVVTCPQSLPWNTTCAFECKEGFELIGPEHLQCTSSGSWDGKKPTCKAVTCDTVGHPQNGDVSCNHSSIGEFAYKSTCHFTCAEGFGLQGPAQIECTAQGQWTQQAPVCKAVKCPAVSQPKNGLVKFTHSPTGEFTYKSSCAFSCEEGFELRGSAQLACTSQGQWTQEVPSCQVVQCSSLEVPREINMSCSGEPVFGAVCTFACPEGWMLNGSVALTCGATGHWSGMLPTCEAPAESKIPLAMGLAAGGVSFMTSASFLLWLLKRLRKRAKKFVPSSSSECLQPNGSYQMPSDLI</sequence>
<accession>P98110</accession>